<accession>P80508</accession>
<proteinExistence type="evidence at protein level"/>
<evidence type="ECO:0000250" key="1"/>
<evidence type="ECO:0000269" key="2">
    <source>
    </source>
</evidence>
<evidence type="ECO:0000305" key="3"/>
<evidence type="ECO:0007829" key="4">
    <source>
        <dbReference type="PDB" id="1Q13"/>
    </source>
</evidence>
<evidence type="ECO:0007829" key="5">
    <source>
        <dbReference type="PDB" id="1Q5M"/>
    </source>
</evidence>
<protein>
    <recommendedName>
        <fullName>Prostaglandin-E(2) 9-reductase</fullName>
        <ecNumber>1.1.1.189</ecNumber>
    </recommendedName>
    <alternativeName>
        <fullName>20-alpha-hydroxysteroid dehydrogenase</fullName>
        <shortName>20-alpha-HSD</shortName>
        <ecNumber>1.1.1.149</ecNumber>
    </alternativeName>
</protein>
<reference key="1">
    <citation type="journal article" date="1993" name="Mol. Endocrinol.">
        <title>Molecular cloning and expression of an abundant rabbit ovarian protein with 20 alpha-hydroxysteroid dehydrogenase activity.</title>
        <authorList>
            <person name="Lacy W.R."/>
            <person name="Washenick K.J."/>
            <person name="Cook R.G."/>
            <person name="Dunbar B.S."/>
        </authorList>
    </citation>
    <scope>NUCLEOTIDE SEQUENCE [MRNA]</scope>
    <source>
        <strain>New Zealand white</strain>
        <tissue>Ovary</tissue>
    </source>
</reference>
<reference key="2">
    <citation type="journal article" date="1993" name="Mol. Endocrinol.">
        <authorList>
            <person name="Lacy W.R."/>
            <person name="Dunbar B.S."/>
        </authorList>
    </citation>
    <scope>ERRATUM OF PUBMED:8446108</scope>
</reference>
<reference key="3">
    <citation type="journal article" date="1995" name="Eur. J. Biochem.">
        <title>Prostaglandin-E2 9-reductase from corpus luteum of pseudopregnant rabbit is a member of the aldo-keto reductase superfamily featuring 20 alpha-hydroxysteroid dehydrogenase activity.</title>
        <authorList>
            <person name="Wintergalen N."/>
            <person name="Thole H.H."/>
            <person name="Galla H.-J."/>
            <person name="Schlegel W."/>
        </authorList>
    </citation>
    <scope>PROTEIN SEQUENCE OF 134-170 AND 279-314</scope>
    <source>
        <tissue>Corpus luteum</tissue>
    </source>
</reference>
<reference key="4">
    <citation type="journal article" date="2004" name="J. Mol. Biol.">
        <title>Loop relaxation, a mechanism that explains the reduced specificity of rabbit 20alpha-hydroxysteroid dehydrogenase, a member of the aldo-keto reductase superfamily.</title>
        <authorList>
            <person name="Couture J.-F."/>
            <person name="Legrand P."/>
            <person name="Cantin L."/>
            <person name="Labrie F."/>
            <person name="Luu-The V."/>
            <person name="Breton R."/>
        </authorList>
    </citation>
    <scope>X-RAY CRYSTALLOGRAPHY (1.32 ANGSTROMS) IN COMPLEX WITH NADPH; NADP AND TESTOSTERONE</scope>
    <scope>MUTAGENESIS OF PHE-54 AND VAL-306</scope>
</reference>
<feature type="chain" id="PRO_0000124651" description="Prostaglandin-E(2) 9-reductase">
    <location>
        <begin position="1"/>
        <end position="323"/>
    </location>
</feature>
<feature type="active site" description="Proton donor">
    <location>
        <position position="55"/>
    </location>
</feature>
<feature type="binding site" evidence="2">
    <location>
        <begin position="23"/>
        <end position="24"/>
    </location>
    <ligand>
        <name>NADP(+)</name>
        <dbReference type="ChEBI" id="CHEBI:58349"/>
    </ligand>
</feature>
<feature type="binding site">
    <location>
        <position position="24"/>
    </location>
    <ligand>
        <name>substrate</name>
    </ligand>
</feature>
<feature type="binding site" evidence="2">
    <location>
        <position position="50"/>
    </location>
    <ligand>
        <name>NADP(+)</name>
        <dbReference type="ChEBI" id="CHEBI:58349"/>
    </ligand>
</feature>
<feature type="binding site">
    <location>
        <position position="117"/>
    </location>
    <ligand>
        <name>substrate</name>
    </ligand>
</feature>
<feature type="binding site" evidence="2">
    <location>
        <begin position="166"/>
        <end position="167"/>
    </location>
    <ligand>
        <name>NADP(+)</name>
        <dbReference type="ChEBI" id="CHEBI:58349"/>
    </ligand>
</feature>
<feature type="binding site" evidence="2">
    <location>
        <position position="190"/>
    </location>
    <ligand>
        <name>NADP(+)</name>
        <dbReference type="ChEBI" id="CHEBI:58349"/>
    </ligand>
</feature>
<feature type="binding site" evidence="2">
    <location>
        <begin position="216"/>
        <end position="221"/>
    </location>
    <ligand>
        <name>NADP(+)</name>
        <dbReference type="ChEBI" id="CHEBI:58349"/>
    </ligand>
</feature>
<feature type="binding site" evidence="2">
    <location>
        <begin position="270"/>
        <end position="280"/>
    </location>
    <ligand>
        <name>NADP(+)</name>
        <dbReference type="ChEBI" id="CHEBI:58349"/>
    </ligand>
</feature>
<feature type="site" description="Required for substrate specificity">
    <location>
        <position position="54"/>
    </location>
</feature>
<feature type="site" description="Lowers pKa of active site Tyr" evidence="1">
    <location>
        <position position="84"/>
    </location>
</feature>
<feature type="mutagenesis site" description="49% reduction in 20alpha-HSD activity; little effect on 3-alpha-HSD." evidence="2">
    <original>F</original>
    <variation>L</variation>
    <location>
        <position position="54"/>
    </location>
</feature>
<feature type="mutagenesis site" description="73% reduction in 20alpha-HSD activity; little effect on 3-alpha-HSD." evidence="2">
    <original>F</original>
    <variation>V</variation>
    <location>
        <position position="54"/>
    </location>
</feature>
<feature type="mutagenesis site" description="Greatly reduced 3alpha-HSD activity toward DHT; little effect on 20alpha-HSD activity." evidence="2">
    <original>V</original>
    <variation>F</variation>
    <location>
        <position position="306"/>
    </location>
</feature>
<feature type="helix" evidence="5">
    <location>
        <begin position="3"/>
        <end position="5"/>
    </location>
</feature>
<feature type="strand" evidence="5">
    <location>
        <begin position="7"/>
        <end position="9"/>
    </location>
</feature>
<feature type="strand" evidence="5">
    <location>
        <begin position="15"/>
        <end position="22"/>
    </location>
</feature>
<feature type="helix" evidence="5">
    <location>
        <begin position="31"/>
        <end position="44"/>
    </location>
</feature>
<feature type="strand" evidence="5">
    <location>
        <begin position="48"/>
        <end position="50"/>
    </location>
</feature>
<feature type="helix" evidence="5">
    <location>
        <begin position="53"/>
        <end position="55"/>
    </location>
</feature>
<feature type="helix" evidence="5">
    <location>
        <begin position="58"/>
        <end position="70"/>
    </location>
</feature>
<feature type="helix" evidence="5">
    <location>
        <begin position="76"/>
        <end position="78"/>
    </location>
</feature>
<feature type="strand" evidence="5">
    <location>
        <begin position="80"/>
        <end position="85"/>
    </location>
</feature>
<feature type="helix" evidence="5">
    <location>
        <begin position="87"/>
        <end position="89"/>
    </location>
</feature>
<feature type="helix" evidence="5">
    <location>
        <begin position="92"/>
        <end position="106"/>
    </location>
</feature>
<feature type="strand" evidence="5">
    <location>
        <begin position="111"/>
        <end position="117"/>
    </location>
</feature>
<feature type="strand" evidence="4">
    <location>
        <begin position="133"/>
        <end position="137"/>
    </location>
</feature>
<feature type="helix" evidence="5">
    <location>
        <begin position="144"/>
        <end position="156"/>
    </location>
</feature>
<feature type="strand" evidence="5">
    <location>
        <begin position="159"/>
        <end position="167"/>
    </location>
</feature>
<feature type="helix" evidence="5">
    <location>
        <begin position="170"/>
        <end position="177"/>
    </location>
</feature>
<feature type="strand" evidence="5">
    <location>
        <begin position="188"/>
        <end position="192"/>
    </location>
</feature>
<feature type="helix" evidence="5">
    <location>
        <begin position="200"/>
        <end position="208"/>
    </location>
</feature>
<feature type="strand" evidence="5">
    <location>
        <begin position="212"/>
        <end position="217"/>
    </location>
</feature>
<feature type="turn" evidence="5">
    <location>
        <begin position="225"/>
        <end position="227"/>
    </location>
</feature>
<feature type="helix" evidence="5">
    <location>
        <begin position="235"/>
        <end position="237"/>
    </location>
</feature>
<feature type="helix" evidence="5">
    <location>
        <begin position="239"/>
        <end position="248"/>
    </location>
</feature>
<feature type="helix" evidence="5">
    <location>
        <begin position="252"/>
        <end position="261"/>
    </location>
</feature>
<feature type="turn" evidence="5">
    <location>
        <begin position="262"/>
        <end position="264"/>
    </location>
</feature>
<feature type="strand" evidence="5">
    <location>
        <begin position="266"/>
        <end position="269"/>
    </location>
</feature>
<feature type="helix" evidence="5">
    <location>
        <begin position="274"/>
        <end position="281"/>
    </location>
</feature>
<feature type="helix" evidence="5">
    <location>
        <begin position="282"/>
        <end position="285"/>
    </location>
</feature>
<feature type="helix" evidence="5">
    <location>
        <begin position="290"/>
        <end position="297"/>
    </location>
</feature>
<feature type="helix" evidence="5">
    <location>
        <begin position="309"/>
        <end position="311"/>
    </location>
</feature>
<feature type="strand" evidence="5">
    <location>
        <begin position="318"/>
        <end position="321"/>
    </location>
</feature>
<sequence length="323" mass="36670">MDPKFQRVALSDGHFIPVLGFGTYAPEEVPKSKAMEATKIAIDAGFRHIDSAYFYKNEKEVGLAIRSKIADGTVKREDIFYTSKLWCTFHRPELVRPSLEDSLKNLQLDYVDLYIIHFPTALKPGVEIIPTDEHGKAIFDTVDICATWEAMEKCKDAGLAKSIGVSNFNRRQLEMILNKPGLKYKPVCNQVECHPYLNQGKLLEFCKSKGIVLVAYSALGSHREPEWVDQSAPVLLEDPLIGALAKKHQQTPALIALRYQLQRGIVVLAKSFTEKRIKENIQVFEFQLPSEDMKVIDSLNRNFRYVTADFAIGHPNYPFSDEY</sequence>
<dbReference type="EC" id="1.1.1.189"/>
<dbReference type="EC" id="1.1.1.149"/>
<dbReference type="EMBL" id="L17006">
    <property type="protein sequence ID" value="AAA31155.1"/>
    <property type="molecule type" value="mRNA"/>
</dbReference>
<dbReference type="PIR" id="A45366">
    <property type="entry name" value="A45366"/>
</dbReference>
<dbReference type="RefSeq" id="NP_001075719.1">
    <property type="nucleotide sequence ID" value="NM_001082250.1"/>
</dbReference>
<dbReference type="PDB" id="1Q13">
    <property type="method" value="X-ray"/>
    <property type="resolution" value="2.08 A"/>
    <property type="chains" value="A/B=1-323"/>
</dbReference>
<dbReference type="PDB" id="1Q5M">
    <property type="method" value="X-ray"/>
    <property type="resolution" value="1.32 A"/>
    <property type="chains" value="A/B=2-323"/>
</dbReference>
<dbReference type="PDBsum" id="1Q13"/>
<dbReference type="PDBsum" id="1Q5M"/>
<dbReference type="SMR" id="P80508"/>
<dbReference type="FunCoup" id="P80508">
    <property type="interactions" value="248"/>
</dbReference>
<dbReference type="STRING" id="9986.ENSOCUP00000017578"/>
<dbReference type="PaxDb" id="9986-ENSOCUP00000017578"/>
<dbReference type="GeneID" id="100009071"/>
<dbReference type="KEGG" id="ocu:100009071"/>
<dbReference type="CTD" id="100009071"/>
<dbReference type="eggNOG" id="KOG1577">
    <property type="taxonomic scope" value="Eukaryota"/>
</dbReference>
<dbReference type="HOGENOM" id="CLU_023205_0_0_1"/>
<dbReference type="InParanoid" id="P80508"/>
<dbReference type="OMA" id="WNNYHAK"/>
<dbReference type="OrthoDB" id="416253at2759"/>
<dbReference type="TreeFam" id="TF106492"/>
<dbReference type="EvolutionaryTrace" id="P80508"/>
<dbReference type="Proteomes" id="UP000001811">
    <property type="component" value="Unplaced"/>
</dbReference>
<dbReference type="GO" id="GO:0005737">
    <property type="term" value="C:cytoplasm"/>
    <property type="evidence" value="ECO:0007669"/>
    <property type="project" value="UniProtKB-SubCell"/>
</dbReference>
<dbReference type="GO" id="GO:0047006">
    <property type="term" value="F:17-alpha,20-alpha-dihydroxypregn-4-en-3-one dehydrogenase [NAD(P)+] activity"/>
    <property type="evidence" value="ECO:0007669"/>
    <property type="project" value="UniProtKB-EC"/>
</dbReference>
<dbReference type="GO" id="GO:0050221">
    <property type="term" value="F:prostaglandin E2 9-reductase activity"/>
    <property type="evidence" value="ECO:0007669"/>
    <property type="project" value="UniProtKB-EC"/>
</dbReference>
<dbReference type="GO" id="GO:0001516">
    <property type="term" value="P:prostaglandin biosynthetic process"/>
    <property type="evidence" value="ECO:0007669"/>
    <property type="project" value="UniProtKB-KW"/>
</dbReference>
<dbReference type="CDD" id="cd19108">
    <property type="entry name" value="AKR_AKR1C1-35"/>
    <property type="match status" value="1"/>
</dbReference>
<dbReference type="FunFam" id="3.20.20.100:FF:000003">
    <property type="entry name" value="Aldo-keto reductase family 1 member C3"/>
    <property type="match status" value="1"/>
</dbReference>
<dbReference type="Gene3D" id="3.20.20.100">
    <property type="entry name" value="NADP-dependent oxidoreductase domain"/>
    <property type="match status" value="1"/>
</dbReference>
<dbReference type="InterPro" id="IPR020471">
    <property type="entry name" value="AKR"/>
</dbReference>
<dbReference type="InterPro" id="IPR044482">
    <property type="entry name" value="AKR1C"/>
</dbReference>
<dbReference type="InterPro" id="IPR018170">
    <property type="entry name" value="Aldo/ket_reductase_CS"/>
</dbReference>
<dbReference type="InterPro" id="IPR023210">
    <property type="entry name" value="NADP_OxRdtase_dom"/>
</dbReference>
<dbReference type="InterPro" id="IPR036812">
    <property type="entry name" value="NADP_OxRdtase_dom_sf"/>
</dbReference>
<dbReference type="PANTHER" id="PTHR11732">
    <property type="entry name" value="ALDO/KETO REDUCTASE"/>
    <property type="match status" value="1"/>
</dbReference>
<dbReference type="Pfam" id="PF00248">
    <property type="entry name" value="Aldo_ket_red"/>
    <property type="match status" value="1"/>
</dbReference>
<dbReference type="PIRSF" id="PIRSF000097">
    <property type="entry name" value="AKR"/>
    <property type="match status" value="1"/>
</dbReference>
<dbReference type="PRINTS" id="PR00069">
    <property type="entry name" value="ALDKETRDTASE"/>
</dbReference>
<dbReference type="SUPFAM" id="SSF51430">
    <property type="entry name" value="NAD(P)-linked oxidoreductase"/>
    <property type="match status" value="1"/>
</dbReference>
<dbReference type="PROSITE" id="PS00798">
    <property type="entry name" value="ALDOKETO_REDUCTASE_1"/>
    <property type="match status" value="1"/>
</dbReference>
<dbReference type="PROSITE" id="PS00062">
    <property type="entry name" value="ALDOKETO_REDUCTASE_2"/>
    <property type="match status" value="1"/>
</dbReference>
<dbReference type="PROSITE" id="PS00063">
    <property type="entry name" value="ALDOKETO_REDUCTASE_3"/>
    <property type="match status" value="1"/>
</dbReference>
<organism>
    <name type="scientific">Oryctolagus cuniculus</name>
    <name type="common">Rabbit</name>
    <dbReference type="NCBI Taxonomy" id="9986"/>
    <lineage>
        <taxon>Eukaryota</taxon>
        <taxon>Metazoa</taxon>
        <taxon>Chordata</taxon>
        <taxon>Craniata</taxon>
        <taxon>Vertebrata</taxon>
        <taxon>Euteleostomi</taxon>
        <taxon>Mammalia</taxon>
        <taxon>Eutheria</taxon>
        <taxon>Euarchontoglires</taxon>
        <taxon>Glires</taxon>
        <taxon>Lagomorpha</taxon>
        <taxon>Leporidae</taxon>
        <taxon>Oryctolagus</taxon>
    </lineage>
</organism>
<gene>
    <name type="primary">AKR1C5</name>
</gene>
<comment type="function">
    <text>Can convert prostaglandin E2 to prostaglandin F2-alpha.</text>
</comment>
<comment type="catalytic activity">
    <reaction>
        <text>prostaglandin F2alpha + NADP(+) = prostaglandin E2 + NADPH + H(+)</text>
        <dbReference type="Rhea" id="RHEA:24508"/>
        <dbReference type="ChEBI" id="CHEBI:15378"/>
        <dbReference type="ChEBI" id="CHEBI:57404"/>
        <dbReference type="ChEBI" id="CHEBI:57783"/>
        <dbReference type="ChEBI" id="CHEBI:58349"/>
        <dbReference type="ChEBI" id="CHEBI:606564"/>
        <dbReference type="EC" id="1.1.1.189"/>
    </reaction>
</comment>
<comment type="catalytic activity">
    <reaction>
        <text>(17R,20S)-17,20-dihydroxypregn-4-en-3-one + NADP(+) = 17alpha-hydroxyprogesterone + NADPH + H(+)</text>
        <dbReference type="Rhea" id="RHEA:15857"/>
        <dbReference type="ChEBI" id="CHEBI:15378"/>
        <dbReference type="ChEBI" id="CHEBI:16418"/>
        <dbReference type="ChEBI" id="CHEBI:17252"/>
        <dbReference type="ChEBI" id="CHEBI:57783"/>
        <dbReference type="ChEBI" id="CHEBI:58349"/>
        <dbReference type="EC" id="1.1.1.149"/>
    </reaction>
</comment>
<comment type="catalytic activity">
    <reaction>
        <text>(17R,20S)-17,20-dihydroxypregn-4-en-3-one + NAD(+) = 17alpha-hydroxyprogesterone + NADH + H(+)</text>
        <dbReference type="Rhea" id="RHEA:15853"/>
        <dbReference type="ChEBI" id="CHEBI:15378"/>
        <dbReference type="ChEBI" id="CHEBI:16418"/>
        <dbReference type="ChEBI" id="CHEBI:17252"/>
        <dbReference type="ChEBI" id="CHEBI:57540"/>
        <dbReference type="ChEBI" id="CHEBI:57945"/>
        <dbReference type="EC" id="1.1.1.149"/>
    </reaction>
</comment>
<comment type="subcellular location">
    <subcellularLocation>
        <location>Cytoplasm</location>
    </subcellularLocation>
</comment>
<comment type="similarity">
    <text evidence="3">Belongs to the aldo/keto reductase family.</text>
</comment>
<name>PE2R_RABIT</name>
<keyword id="KW-0002">3D-structure</keyword>
<keyword id="KW-0963">Cytoplasm</keyword>
<keyword id="KW-0903">Direct protein sequencing</keyword>
<keyword id="KW-0275">Fatty acid biosynthesis</keyword>
<keyword id="KW-0276">Fatty acid metabolism</keyword>
<keyword id="KW-0444">Lipid biosynthesis</keyword>
<keyword id="KW-0443">Lipid metabolism</keyword>
<keyword id="KW-0521">NADP</keyword>
<keyword id="KW-0560">Oxidoreductase</keyword>
<keyword id="KW-0643">Prostaglandin biosynthesis</keyword>
<keyword id="KW-0644">Prostaglandin metabolism</keyword>
<keyword id="KW-1185">Reference proteome</keyword>